<comment type="function">
    <text evidence="1">Together with the chaperonin GroEL, plays an essential role in assisting protein folding. The GroEL-GroES system forms a nano-cage that allows encapsulation of the non-native substrate proteins and provides a physical environment optimized to promote and accelerate protein folding. GroES binds to the apical surface of the GroEL ring, thereby capping the opening of the GroEL channel.</text>
</comment>
<comment type="subunit">
    <text evidence="1">Heptamer of 7 subunits arranged in a ring. Interacts with the chaperonin GroEL.</text>
</comment>
<comment type="subcellular location">
    <subcellularLocation>
        <location evidence="1">Cytoplasm</location>
    </subcellularLocation>
</comment>
<comment type="similarity">
    <text evidence="1">Belongs to the GroES chaperonin family.</text>
</comment>
<feature type="chain" id="PRO_1000025301" description="Co-chaperonin GroES">
    <location>
        <begin position="1"/>
        <end position="96"/>
    </location>
</feature>
<reference key="1">
    <citation type="journal article" date="2007" name="J. Bacteriol.">
        <title>Whole-genome analysis of the methyl tert-butyl ether-degrading beta-proteobacterium Methylibium petroleiphilum PM1.</title>
        <authorList>
            <person name="Kane S.R."/>
            <person name="Chakicherla A.Y."/>
            <person name="Chain P.S.G."/>
            <person name="Schmidt R."/>
            <person name="Shin M.W."/>
            <person name="Legler T.C."/>
            <person name="Scow K.M."/>
            <person name="Larimer F.W."/>
            <person name="Lucas S.M."/>
            <person name="Richardson P.M."/>
            <person name="Hristova K.R."/>
        </authorList>
    </citation>
    <scope>NUCLEOTIDE SEQUENCE [LARGE SCALE GENOMIC DNA]</scope>
    <source>
        <strain>ATCC BAA-1232 / LMG 22953 / PM1</strain>
    </source>
</reference>
<protein>
    <recommendedName>
        <fullName evidence="1">Co-chaperonin GroES</fullName>
    </recommendedName>
    <alternativeName>
        <fullName evidence="1">10 kDa chaperonin</fullName>
    </alternativeName>
    <alternativeName>
        <fullName evidence="1">Chaperonin-10</fullName>
        <shortName evidence="1">Cpn10</shortName>
    </alternativeName>
</protein>
<evidence type="ECO:0000255" key="1">
    <source>
        <dbReference type="HAMAP-Rule" id="MF_00580"/>
    </source>
</evidence>
<gene>
    <name evidence="1" type="primary">groES</name>
    <name evidence="1" type="synonym">groS</name>
    <name type="ordered locus">Mpe_A0427</name>
</gene>
<name>CH10_METPP</name>
<dbReference type="EMBL" id="CP000555">
    <property type="protein sequence ID" value="ABM93389.1"/>
    <property type="molecule type" value="Genomic_DNA"/>
</dbReference>
<dbReference type="RefSeq" id="WP_011828027.1">
    <property type="nucleotide sequence ID" value="NC_008825.1"/>
</dbReference>
<dbReference type="SMR" id="A2SCV0"/>
<dbReference type="STRING" id="420662.Mpe_A0427"/>
<dbReference type="KEGG" id="mpt:Mpe_A0427"/>
<dbReference type="eggNOG" id="COG0234">
    <property type="taxonomic scope" value="Bacteria"/>
</dbReference>
<dbReference type="HOGENOM" id="CLU_132825_1_0_4"/>
<dbReference type="Proteomes" id="UP000000366">
    <property type="component" value="Chromosome"/>
</dbReference>
<dbReference type="GO" id="GO:0005737">
    <property type="term" value="C:cytoplasm"/>
    <property type="evidence" value="ECO:0007669"/>
    <property type="project" value="UniProtKB-SubCell"/>
</dbReference>
<dbReference type="GO" id="GO:0005524">
    <property type="term" value="F:ATP binding"/>
    <property type="evidence" value="ECO:0007669"/>
    <property type="project" value="InterPro"/>
</dbReference>
<dbReference type="GO" id="GO:0046872">
    <property type="term" value="F:metal ion binding"/>
    <property type="evidence" value="ECO:0007669"/>
    <property type="project" value="TreeGrafter"/>
</dbReference>
<dbReference type="GO" id="GO:0044183">
    <property type="term" value="F:protein folding chaperone"/>
    <property type="evidence" value="ECO:0007669"/>
    <property type="project" value="InterPro"/>
</dbReference>
<dbReference type="GO" id="GO:0051087">
    <property type="term" value="F:protein-folding chaperone binding"/>
    <property type="evidence" value="ECO:0007669"/>
    <property type="project" value="TreeGrafter"/>
</dbReference>
<dbReference type="GO" id="GO:0051082">
    <property type="term" value="F:unfolded protein binding"/>
    <property type="evidence" value="ECO:0007669"/>
    <property type="project" value="TreeGrafter"/>
</dbReference>
<dbReference type="GO" id="GO:0051085">
    <property type="term" value="P:chaperone cofactor-dependent protein refolding"/>
    <property type="evidence" value="ECO:0007669"/>
    <property type="project" value="TreeGrafter"/>
</dbReference>
<dbReference type="CDD" id="cd00320">
    <property type="entry name" value="cpn10"/>
    <property type="match status" value="1"/>
</dbReference>
<dbReference type="FunFam" id="2.30.33.40:FF:000001">
    <property type="entry name" value="10 kDa chaperonin"/>
    <property type="match status" value="1"/>
</dbReference>
<dbReference type="Gene3D" id="2.30.33.40">
    <property type="entry name" value="GroES chaperonin"/>
    <property type="match status" value="1"/>
</dbReference>
<dbReference type="HAMAP" id="MF_00580">
    <property type="entry name" value="CH10"/>
    <property type="match status" value="1"/>
</dbReference>
<dbReference type="InterPro" id="IPR020818">
    <property type="entry name" value="Chaperonin_GroES"/>
</dbReference>
<dbReference type="InterPro" id="IPR037124">
    <property type="entry name" value="Chaperonin_GroES_sf"/>
</dbReference>
<dbReference type="InterPro" id="IPR018369">
    <property type="entry name" value="Chaprnonin_Cpn10_CS"/>
</dbReference>
<dbReference type="InterPro" id="IPR011032">
    <property type="entry name" value="GroES-like_sf"/>
</dbReference>
<dbReference type="NCBIfam" id="NF001527">
    <property type="entry name" value="PRK00364.1-2"/>
    <property type="match status" value="1"/>
</dbReference>
<dbReference type="NCBIfam" id="NF001529">
    <property type="entry name" value="PRK00364.1-5"/>
    <property type="match status" value="1"/>
</dbReference>
<dbReference type="NCBIfam" id="NF001531">
    <property type="entry name" value="PRK00364.2-2"/>
    <property type="match status" value="1"/>
</dbReference>
<dbReference type="NCBIfam" id="NF001533">
    <property type="entry name" value="PRK00364.2-4"/>
    <property type="match status" value="1"/>
</dbReference>
<dbReference type="PANTHER" id="PTHR10772">
    <property type="entry name" value="10 KDA HEAT SHOCK PROTEIN"/>
    <property type="match status" value="1"/>
</dbReference>
<dbReference type="PANTHER" id="PTHR10772:SF58">
    <property type="entry name" value="CO-CHAPERONIN GROES"/>
    <property type="match status" value="1"/>
</dbReference>
<dbReference type="Pfam" id="PF00166">
    <property type="entry name" value="Cpn10"/>
    <property type="match status" value="1"/>
</dbReference>
<dbReference type="PRINTS" id="PR00297">
    <property type="entry name" value="CHAPERONIN10"/>
</dbReference>
<dbReference type="SMART" id="SM00883">
    <property type="entry name" value="Cpn10"/>
    <property type="match status" value="1"/>
</dbReference>
<dbReference type="SUPFAM" id="SSF50129">
    <property type="entry name" value="GroES-like"/>
    <property type="match status" value="1"/>
</dbReference>
<dbReference type="PROSITE" id="PS00681">
    <property type="entry name" value="CHAPERONINS_CPN10"/>
    <property type="match status" value="1"/>
</dbReference>
<accession>A2SCV0</accession>
<proteinExistence type="inferred from homology"/>
<organism>
    <name type="scientific">Methylibium petroleiphilum (strain ATCC BAA-1232 / LMG 22953 / PM1)</name>
    <dbReference type="NCBI Taxonomy" id="420662"/>
    <lineage>
        <taxon>Bacteria</taxon>
        <taxon>Pseudomonadati</taxon>
        <taxon>Pseudomonadota</taxon>
        <taxon>Betaproteobacteria</taxon>
        <taxon>Burkholderiales</taxon>
        <taxon>Sphaerotilaceae</taxon>
        <taxon>Methylibium</taxon>
    </lineage>
</organism>
<keyword id="KW-0143">Chaperone</keyword>
<keyword id="KW-0963">Cytoplasm</keyword>
<keyword id="KW-1185">Reference proteome</keyword>
<sequence>MKLRPLHDRVIVKRLEQETKTASGIVIPDNAAEKPDQGEVLAVGPGKRNDKGDFIALNCKVGDRVLFGKYSGQTVKVDGDELLVMREEDLFAVVEK</sequence>